<sequence length="523" mass="60643">MYQNNVLNAILASEKSNFQYDSGTILRNHKRPIITFNNNIEHTVSEPNNFTGYEEKEDLDIMDICPYYPKARMLADAIQHAKTSASENKMELSMKTIPCLKKENVHVEKGHDWSQLSTSRICKILEDIADKKNKTRRQSAPLQKTKYFPTNENQNTDIENQNWSQIPNEDICALIEKIASRRNKNRKRKNLSCSKVQEIQGNIDLPKKDVQEGDISDSSLFAAVRGTKKVSGYDYNSEDKIPNAIRLPYCKQILRLFSLLQMKRNDLIVTSENCNSGVFFSNFNYQLQVKSNCIANISSTLSFLPHHEITVYTSFILYPNVVDNIWECTRYAIQLLKSEAAQFTLLRDIYSGFTIILSNHRYHPKGFSADYCYSANELTLFLFVIRTGQKKVLYRSIPHNTAAIEKDSSFDTENRKRRSEEEVVLKCRKCSNNSLALKEISTYRLDSAEGFEKSQPLKDEAKLSDMNYVQGSISYNRTILTGLWKLFHRLCCKDRYRKTNLSETLFYDDSTERWVRMGELMHY</sequence>
<accession>P38299</accession>
<accession>D6VQH9</accession>
<proteinExistence type="predicted"/>
<dbReference type="EMBL" id="U02073">
    <property type="protein sequence ID" value="AAB60278.1"/>
    <property type="molecule type" value="Genomic_DNA"/>
</dbReference>
<dbReference type="EMBL" id="Z36053">
    <property type="protein sequence ID" value="CAA85145.1"/>
    <property type="molecule type" value="Genomic_DNA"/>
</dbReference>
<dbReference type="EMBL" id="AY692613">
    <property type="protein sequence ID" value="AAT92632.1"/>
    <property type="molecule type" value="Genomic_DNA"/>
</dbReference>
<dbReference type="EMBL" id="BK006936">
    <property type="protein sequence ID" value="DAA07299.1"/>
    <property type="molecule type" value="Genomic_DNA"/>
</dbReference>
<dbReference type="PIR" id="S46056">
    <property type="entry name" value="S46056"/>
</dbReference>
<dbReference type="RefSeq" id="NP_009743.3">
    <property type="nucleotide sequence ID" value="NM_001178532.3"/>
</dbReference>
<dbReference type="SMR" id="P38299"/>
<dbReference type="BioGRID" id="32882">
    <property type="interactions" value="76"/>
</dbReference>
<dbReference type="DIP" id="DIP-4940N"/>
<dbReference type="FunCoup" id="P38299">
    <property type="interactions" value="57"/>
</dbReference>
<dbReference type="IntAct" id="P38299">
    <property type="interactions" value="3"/>
</dbReference>
<dbReference type="MINT" id="P38299"/>
<dbReference type="STRING" id="4932.YBR184W"/>
<dbReference type="iPTMnet" id="P38299"/>
<dbReference type="PaxDb" id="4932-YBR184W"/>
<dbReference type="PeptideAtlas" id="P38299"/>
<dbReference type="EnsemblFungi" id="YBR184W_mRNA">
    <property type="protein sequence ID" value="YBR184W"/>
    <property type="gene ID" value="YBR184W"/>
</dbReference>
<dbReference type="GeneID" id="852482"/>
<dbReference type="KEGG" id="sce:YBR184W"/>
<dbReference type="AGR" id="SGD:S000000388"/>
<dbReference type="SGD" id="S000000388">
    <property type="gene designation" value="YBR184W"/>
</dbReference>
<dbReference type="VEuPathDB" id="FungiDB:YBR184W"/>
<dbReference type="HOGENOM" id="CLU_039541_0_0_1"/>
<dbReference type="InParanoid" id="P38299"/>
<dbReference type="OMA" id="ASENKME"/>
<dbReference type="OrthoDB" id="4041370at2759"/>
<dbReference type="BioCyc" id="YEAST:G3O-29127-MONOMER"/>
<dbReference type="BioGRID-ORCS" id="852482">
    <property type="hits" value="1 hit in 10 CRISPR screens"/>
</dbReference>
<dbReference type="PRO" id="PR:P38299"/>
<dbReference type="Proteomes" id="UP000002311">
    <property type="component" value="Chromosome II"/>
</dbReference>
<dbReference type="RNAct" id="P38299">
    <property type="molecule type" value="protein"/>
</dbReference>
<protein>
    <recommendedName>
        <fullName>Uncharacterized protein YBR184W</fullName>
    </recommendedName>
</protein>
<organism>
    <name type="scientific">Saccharomyces cerevisiae (strain ATCC 204508 / S288c)</name>
    <name type="common">Baker's yeast</name>
    <dbReference type="NCBI Taxonomy" id="559292"/>
    <lineage>
        <taxon>Eukaryota</taxon>
        <taxon>Fungi</taxon>
        <taxon>Dikarya</taxon>
        <taxon>Ascomycota</taxon>
        <taxon>Saccharomycotina</taxon>
        <taxon>Saccharomycetes</taxon>
        <taxon>Saccharomycetales</taxon>
        <taxon>Saccharomycetaceae</taxon>
        <taxon>Saccharomyces</taxon>
    </lineage>
</organism>
<keyword id="KW-1185">Reference proteome</keyword>
<gene>
    <name type="ordered locus">YBR184W</name>
    <name type="ORF">YBR1306</name>
</gene>
<feature type="chain" id="PRO_0000202505" description="Uncharacterized protein YBR184W">
    <location>
        <begin position="1"/>
        <end position="523"/>
    </location>
</feature>
<reference key="1">
    <citation type="journal article" date="1994" name="Yeast">
        <title>A 12.5 kb fragment of the yeast chromosome II contains two adjacent genes encoding ribosomal proteins and six putative new genes, one of which encodes a putative transcriptional factor.</title>
        <authorList>
            <person name="Demolis N."/>
            <person name="Jacquet M."/>
            <person name="Mallet L."/>
        </authorList>
    </citation>
    <scope>NUCLEOTIDE SEQUENCE [GENOMIC DNA]</scope>
    <source>
        <strain>ATCC 204508 / S288c</strain>
    </source>
</reference>
<reference key="2">
    <citation type="journal article" date="1994" name="EMBO J.">
        <title>Complete DNA sequence of yeast chromosome II.</title>
        <authorList>
            <person name="Feldmann H."/>
            <person name="Aigle M."/>
            <person name="Aljinovic G."/>
            <person name="Andre B."/>
            <person name="Baclet M.C."/>
            <person name="Barthe C."/>
            <person name="Baur A."/>
            <person name="Becam A.-M."/>
            <person name="Biteau N."/>
            <person name="Boles E."/>
            <person name="Brandt T."/>
            <person name="Brendel M."/>
            <person name="Brueckner M."/>
            <person name="Bussereau F."/>
            <person name="Christiansen C."/>
            <person name="Contreras R."/>
            <person name="Crouzet M."/>
            <person name="Cziepluch C."/>
            <person name="Demolis N."/>
            <person name="Delaveau T."/>
            <person name="Doignon F."/>
            <person name="Domdey H."/>
            <person name="Duesterhus S."/>
            <person name="Dubois E."/>
            <person name="Dujon B."/>
            <person name="El Bakkoury M."/>
            <person name="Entian K.-D."/>
            <person name="Feuermann M."/>
            <person name="Fiers W."/>
            <person name="Fobo G.M."/>
            <person name="Fritz C."/>
            <person name="Gassenhuber J."/>
            <person name="Glansdorff N."/>
            <person name="Goffeau A."/>
            <person name="Grivell L.A."/>
            <person name="de Haan M."/>
            <person name="Hein C."/>
            <person name="Herbert C.J."/>
            <person name="Hollenberg C.P."/>
            <person name="Holmstroem K."/>
            <person name="Jacq C."/>
            <person name="Jacquet M."/>
            <person name="Jauniaux J.-C."/>
            <person name="Jonniaux J.-L."/>
            <person name="Kallesoee T."/>
            <person name="Kiesau P."/>
            <person name="Kirchrath L."/>
            <person name="Koetter P."/>
            <person name="Korol S."/>
            <person name="Liebl S."/>
            <person name="Logghe M."/>
            <person name="Lohan A.J.E."/>
            <person name="Louis E.J."/>
            <person name="Li Z.Y."/>
            <person name="Maat M.J."/>
            <person name="Mallet L."/>
            <person name="Mannhaupt G."/>
            <person name="Messenguy F."/>
            <person name="Miosga T."/>
            <person name="Molemans F."/>
            <person name="Mueller S."/>
            <person name="Nasr F."/>
            <person name="Obermaier B."/>
            <person name="Perea J."/>
            <person name="Pierard A."/>
            <person name="Piravandi E."/>
            <person name="Pohl F.M."/>
            <person name="Pohl T.M."/>
            <person name="Potier S."/>
            <person name="Proft M."/>
            <person name="Purnelle B."/>
            <person name="Ramezani Rad M."/>
            <person name="Rieger M."/>
            <person name="Rose M."/>
            <person name="Schaaff-Gerstenschlaeger I."/>
            <person name="Scherens B."/>
            <person name="Schwarzlose C."/>
            <person name="Skala J."/>
            <person name="Slonimski P.P."/>
            <person name="Smits P.H.M."/>
            <person name="Souciet J.-L."/>
            <person name="Steensma H.Y."/>
            <person name="Stucka R."/>
            <person name="Urrestarazu L.A."/>
            <person name="van der Aart Q.J.M."/>
            <person name="Van Dyck L."/>
            <person name="Vassarotti A."/>
            <person name="Vetter I."/>
            <person name="Vierendeels F."/>
            <person name="Vissers S."/>
            <person name="Wagner G."/>
            <person name="de Wergifosse P."/>
            <person name="Wolfe K.H."/>
            <person name="Zagulski M."/>
            <person name="Zimmermann F.K."/>
            <person name="Mewes H.-W."/>
            <person name="Kleine K."/>
        </authorList>
    </citation>
    <scope>NUCLEOTIDE SEQUENCE [LARGE SCALE GENOMIC DNA]</scope>
    <source>
        <strain>ATCC 204508 / S288c</strain>
    </source>
</reference>
<reference key="3">
    <citation type="journal article" date="2014" name="G3 (Bethesda)">
        <title>The reference genome sequence of Saccharomyces cerevisiae: Then and now.</title>
        <authorList>
            <person name="Engel S.R."/>
            <person name="Dietrich F.S."/>
            <person name="Fisk D.G."/>
            <person name="Binkley G."/>
            <person name="Balakrishnan R."/>
            <person name="Costanzo M.C."/>
            <person name="Dwight S.S."/>
            <person name="Hitz B.C."/>
            <person name="Karra K."/>
            <person name="Nash R.S."/>
            <person name="Weng S."/>
            <person name="Wong E.D."/>
            <person name="Lloyd P."/>
            <person name="Skrzypek M.S."/>
            <person name="Miyasato S.R."/>
            <person name="Simison M."/>
            <person name="Cherry J.M."/>
        </authorList>
    </citation>
    <scope>GENOME REANNOTATION</scope>
    <source>
        <strain>ATCC 204508 / S288c</strain>
    </source>
</reference>
<reference key="4">
    <citation type="journal article" date="2007" name="Genome Res.">
        <title>Approaching a complete repository of sequence-verified protein-encoding clones for Saccharomyces cerevisiae.</title>
        <authorList>
            <person name="Hu Y."/>
            <person name="Rolfs A."/>
            <person name="Bhullar B."/>
            <person name="Murthy T.V.S."/>
            <person name="Zhu C."/>
            <person name="Berger M.F."/>
            <person name="Camargo A.A."/>
            <person name="Kelley F."/>
            <person name="McCarron S."/>
            <person name="Jepson D."/>
            <person name="Richardson A."/>
            <person name="Raphael J."/>
            <person name="Moreira D."/>
            <person name="Taycher E."/>
            <person name="Zuo D."/>
            <person name="Mohr S."/>
            <person name="Kane M.F."/>
            <person name="Williamson J."/>
            <person name="Simpson A.J.G."/>
            <person name="Bulyk M.L."/>
            <person name="Harlow E."/>
            <person name="Marsischky G."/>
            <person name="Kolodner R.D."/>
            <person name="LaBaer J."/>
        </authorList>
    </citation>
    <scope>NUCLEOTIDE SEQUENCE [GENOMIC DNA]</scope>
    <source>
        <strain>ATCC 204508 / S288c</strain>
    </source>
</reference>
<name>YB34_YEAST</name>